<evidence type="ECO:0000255" key="1">
    <source>
        <dbReference type="HAMAP-Rule" id="MF_01521"/>
    </source>
</evidence>
<comment type="function">
    <text evidence="1">Probably functions as a manganese efflux pump.</text>
</comment>
<comment type="subcellular location">
    <subcellularLocation>
        <location evidence="1">Cell inner membrane</location>
        <topology evidence="1">Multi-pass membrane protein</topology>
    </subcellularLocation>
</comment>
<comment type="similarity">
    <text evidence="1">Belongs to the MntP (TC 9.B.29) family.</text>
</comment>
<sequence>MNFSAILLLALGLAMDATAVAAARGLSVPAIRARHVLLVAGFFGGAQALMPVIGWLLGARIGPRVQAWDHWIAFVLLAFIGGKMLWEARGDGGDDGGEGETTADPFALSAMFVLAIATSIDALAVGITLPMLNAPFAISVVTIGVVTALLSAAGLFAGRRFGALLGKRLDLAGGVVLIGLGFKILLEHLVLS</sequence>
<reference key="1">
    <citation type="journal article" date="2007" name="Nat. Biotechnol.">
        <title>Complete genome sequence of the myxobacterium Sorangium cellulosum.</title>
        <authorList>
            <person name="Schneiker S."/>
            <person name="Perlova O."/>
            <person name="Kaiser O."/>
            <person name="Gerth K."/>
            <person name="Alici A."/>
            <person name="Altmeyer M.O."/>
            <person name="Bartels D."/>
            <person name="Bekel T."/>
            <person name="Beyer S."/>
            <person name="Bode E."/>
            <person name="Bode H.B."/>
            <person name="Bolten C.J."/>
            <person name="Choudhuri J.V."/>
            <person name="Doss S."/>
            <person name="Elnakady Y.A."/>
            <person name="Frank B."/>
            <person name="Gaigalat L."/>
            <person name="Goesmann A."/>
            <person name="Groeger C."/>
            <person name="Gross F."/>
            <person name="Jelsbak L."/>
            <person name="Jelsbak L."/>
            <person name="Kalinowski J."/>
            <person name="Kegler C."/>
            <person name="Knauber T."/>
            <person name="Konietzny S."/>
            <person name="Kopp M."/>
            <person name="Krause L."/>
            <person name="Krug D."/>
            <person name="Linke B."/>
            <person name="Mahmud T."/>
            <person name="Martinez-Arias R."/>
            <person name="McHardy A.C."/>
            <person name="Merai M."/>
            <person name="Meyer F."/>
            <person name="Mormann S."/>
            <person name="Munoz-Dorado J."/>
            <person name="Perez J."/>
            <person name="Pradella S."/>
            <person name="Rachid S."/>
            <person name="Raddatz G."/>
            <person name="Rosenau F."/>
            <person name="Rueckert C."/>
            <person name="Sasse F."/>
            <person name="Scharfe M."/>
            <person name="Schuster S.C."/>
            <person name="Suen G."/>
            <person name="Treuner-Lange A."/>
            <person name="Velicer G.J."/>
            <person name="Vorholter F.-J."/>
            <person name="Weissman K.J."/>
            <person name="Welch R.D."/>
            <person name="Wenzel S.C."/>
            <person name="Whitworth D.E."/>
            <person name="Wilhelm S."/>
            <person name="Wittmann C."/>
            <person name="Bloecker H."/>
            <person name="Puehler A."/>
            <person name="Mueller R."/>
        </authorList>
    </citation>
    <scope>NUCLEOTIDE SEQUENCE [LARGE SCALE GENOMIC DNA]</scope>
    <source>
        <strain>So ce56</strain>
    </source>
</reference>
<name>MNTP_SORC5</name>
<keyword id="KW-0997">Cell inner membrane</keyword>
<keyword id="KW-1003">Cell membrane</keyword>
<keyword id="KW-0406">Ion transport</keyword>
<keyword id="KW-0464">Manganese</keyword>
<keyword id="KW-0472">Membrane</keyword>
<keyword id="KW-1185">Reference proteome</keyword>
<keyword id="KW-0812">Transmembrane</keyword>
<keyword id="KW-1133">Transmembrane helix</keyword>
<keyword id="KW-0813">Transport</keyword>
<protein>
    <recommendedName>
        <fullName evidence="1">Putative manganese efflux pump MntP</fullName>
    </recommendedName>
</protein>
<dbReference type="EMBL" id="AM746676">
    <property type="protein sequence ID" value="CAN90705.1"/>
    <property type="molecule type" value="Genomic_DNA"/>
</dbReference>
<dbReference type="RefSeq" id="WP_012233183.1">
    <property type="nucleotide sequence ID" value="NC_010162.1"/>
</dbReference>
<dbReference type="STRING" id="448385.sce0548"/>
<dbReference type="KEGG" id="scl:sce0548"/>
<dbReference type="eggNOG" id="COG1971">
    <property type="taxonomic scope" value="Bacteria"/>
</dbReference>
<dbReference type="HOGENOM" id="CLU_096410_3_0_7"/>
<dbReference type="OrthoDB" id="9811590at2"/>
<dbReference type="BioCyc" id="SCEL448385:SCE_RS02870-MONOMER"/>
<dbReference type="Proteomes" id="UP000002139">
    <property type="component" value="Chromosome"/>
</dbReference>
<dbReference type="GO" id="GO:0005886">
    <property type="term" value="C:plasma membrane"/>
    <property type="evidence" value="ECO:0007669"/>
    <property type="project" value="UniProtKB-SubCell"/>
</dbReference>
<dbReference type="GO" id="GO:0005384">
    <property type="term" value="F:manganese ion transmembrane transporter activity"/>
    <property type="evidence" value="ECO:0007669"/>
    <property type="project" value="UniProtKB-UniRule"/>
</dbReference>
<dbReference type="HAMAP" id="MF_01521">
    <property type="entry name" value="MntP_pump"/>
    <property type="match status" value="1"/>
</dbReference>
<dbReference type="InterPro" id="IPR003810">
    <property type="entry name" value="Mntp/YtaF"/>
</dbReference>
<dbReference type="InterPro" id="IPR022929">
    <property type="entry name" value="Put_MntP"/>
</dbReference>
<dbReference type="PANTHER" id="PTHR35529">
    <property type="entry name" value="MANGANESE EFFLUX PUMP MNTP-RELATED"/>
    <property type="match status" value="1"/>
</dbReference>
<dbReference type="PANTHER" id="PTHR35529:SF1">
    <property type="entry name" value="MANGANESE EFFLUX PUMP MNTP-RELATED"/>
    <property type="match status" value="1"/>
</dbReference>
<dbReference type="Pfam" id="PF02659">
    <property type="entry name" value="Mntp"/>
    <property type="match status" value="1"/>
</dbReference>
<accession>A9GV45</accession>
<organism>
    <name type="scientific">Sorangium cellulosum (strain So ce56)</name>
    <name type="common">Polyangium cellulosum (strain So ce56)</name>
    <dbReference type="NCBI Taxonomy" id="448385"/>
    <lineage>
        <taxon>Bacteria</taxon>
        <taxon>Pseudomonadati</taxon>
        <taxon>Myxococcota</taxon>
        <taxon>Polyangia</taxon>
        <taxon>Polyangiales</taxon>
        <taxon>Polyangiaceae</taxon>
        <taxon>Sorangium</taxon>
    </lineage>
</organism>
<gene>
    <name evidence="1" type="primary">mntP</name>
    <name type="ordered locus">sce0548</name>
</gene>
<feature type="chain" id="PRO_1000087555" description="Putative manganese efflux pump MntP">
    <location>
        <begin position="1"/>
        <end position="192"/>
    </location>
</feature>
<feature type="transmembrane region" description="Helical" evidence="1">
    <location>
        <begin position="3"/>
        <end position="23"/>
    </location>
</feature>
<feature type="transmembrane region" description="Helical" evidence="1">
    <location>
        <begin position="36"/>
        <end position="56"/>
    </location>
</feature>
<feature type="transmembrane region" description="Helical" evidence="1">
    <location>
        <begin position="65"/>
        <end position="85"/>
    </location>
</feature>
<feature type="transmembrane region" description="Helical" evidence="1">
    <location>
        <begin position="112"/>
        <end position="132"/>
    </location>
</feature>
<feature type="transmembrane region" description="Helical" evidence="1">
    <location>
        <begin position="136"/>
        <end position="156"/>
    </location>
</feature>
<feature type="transmembrane region" description="Helical" evidence="1">
    <location>
        <begin position="171"/>
        <end position="191"/>
    </location>
</feature>
<proteinExistence type="inferred from homology"/>